<comment type="similarity">
    <text evidence="1">Belongs to the UPF0325 family.</text>
</comment>
<reference key="1">
    <citation type="journal article" date="2008" name="PLoS Genet.">
        <title>Complete genome sequence of the N2-fixing broad host range endophyte Klebsiella pneumoniae 342 and virulence predictions verified in mice.</title>
        <authorList>
            <person name="Fouts D.E."/>
            <person name="Tyler H.L."/>
            <person name="DeBoy R.T."/>
            <person name="Daugherty S."/>
            <person name="Ren Q."/>
            <person name="Badger J.H."/>
            <person name="Durkin A.S."/>
            <person name="Huot H."/>
            <person name="Shrivastava S."/>
            <person name="Kothari S."/>
            <person name="Dodson R.J."/>
            <person name="Mohamoud Y."/>
            <person name="Khouri H."/>
            <person name="Roesch L.F.W."/>
            <person name="Krogfelt K.A."/>
            <person name="Struve C."/>
            <person name="Triplett E.W."/>
            <person name="Methe B.A."/>
        </authorList>
    </citation>
    <scope>NUCLEOTIDE SEQUENCE [LARGE SCALE GENOMIC DNA]</scope>
    <source>
        <strain>342</strain>
    </source>
</reference>
<name>Y4555_KLEP3</name>
<proteinExistence type="inferred from homology"/>
<organism>
    <name type="scientific">Klebsiella pneumoniae (strain 342)</name>
    <dbReference type="NCBI Taxonomy" id="507522"/>
    <lineage>
        <taxon>Bacteria</taxon>
        <taxon>Pseudomonadati</taxon>
        <taxon>Pseudomonadota</taxon>
        <taxon>Gammaproteobacteria</taxon>
        <taxon>Enterobacterales</taxon>
        <taxon>Enterobacteriaceae</taxon>
        <taxon>Klebsiella/Raoultella group</taxon>
        <taxon>Klebsiella</taxon>
        <taxon>Klebsiella pneumoniae complex</taxon>
    </lineage>
</organism>
<protein>
    <recommendedName>
        <fullName evidence="1">UPF0325 protein KPK_4555</fullName>
    </recommendedName>
</protein>
<accession>B5Y1K6</accession>
<dbReference type="EMBL" id="CP000964">
    <property type="protein sequence ID" value="ACI09399.1"/>
    <property type="molecule type" value="Genomic_DNA"/>
</dbReference>
<dbReference type="SMR" id="B5Y1K6"/>
<dbReference type="KEGG" id="kpe:KPK_4555"/>
<dbReference type="HOGENOM" id="CLU_136774_0_0_6"/>
<dbReference type="BioCyc" id="KPNE507522:GI0B-4536-MONOMER"/>
<dbReference type="Proteomes" id="UP000001734">
    <property type="component" value="Chromosome"/>
</dbReference>
<dbReference type="HAMAP" id="MF_01519">
    <property type="entry name" value="UPF0325"/>
    <property type="match status" value="1"/>
</dbReference>
<dbReference type="InterPro" id="IPR020911">
    <property type="entry name" value="UPF0325"/>
</dbReference>
<dbReference type="NCBIfam" id="NF010213">
    <property type="entry name" value="PRK13677.1"/>
    <property type="match status" value="1"/>
</dbReference>
<dbReference type="Pfam" id="PF11944">
    <property type="entry name" value="DUF3461"/>
    <property type="match status" value="1"/>
</dbReference>
<feature type="chain" id="PRO_1000198433" description="UPF0325 protein KPK_4555">
    <location>
        <begin position="1"/>
        <end position="128"/>
    </location>
</feature>
<sequence>MYDNLKSLGITNPDEIDRYSLRQEANNDILKIYFQKDKGEFFAKSVKFKYPRQRKTVVADGVGQGYKEVQEISPNLRYVIDELDQICQRDRTEIDLKRKILDDLRHLESVVTNKISEIEADLEKLTRK</sequence>
<evidence type="ECO:0000255" key="1">
    <source>
        <dbReference type="HAMAP-Rule" id="MF_01519"/>
    </source>
</evidence>
<gene>
    <name type="ordered locus">KPK_4555</name>
</gene>